<keyword id="KW-0687">Ribonucleoprotein</keyword>
<keyword id="KW-0689">Ribosomal protein</keyword>
<keyword id="KW-0694">RNA-binding</keyword>
<keyword id="KW-0699">rRNA-binding</keyword>
<accession>A4WS84</accession>
<reference key="1">
    <citation type="submission" date="2007-04" db="EMBL/GenBank/DDBJ databases">
        <title>Complete sequence of chromosome of Rhodobacter sphaeroides ATCC 17025.</title>
        <authorList>
            <consortium name="US DOE Joint Genome Institute"/>
            <person name="Copeland A."/>
            <person name="Lucas S."/>
            <person name="Lapidus A."/>
            <person name="Barry K."/>
            <person name="Detter J.C."/>
            <person name="Glavina del Rio T."/>
            <person name="Hammon N."/>
            <person name="Israni S."/>
            <person name="Dalin E."/>
            <person name="Tice H."/>
            <person name="Pitluck S."/>
            <person name="Chertkov O."/>
            <person name="Brettin T."/>
            <person name="Bruce D."/>
            <person name="Han C."/>
            <person name="Schmutz J."/>
            <person name="Larimer F."/>
            <person name="Land M."/>
            <person name="Hauser L."/>
            <person name="Kyrpides N."/>
            <person name="Kim E."/>
            <person name="Richardson P."/>
            <person name="Mackenzie C."/>
            <person name="Choudhary M."/>
            <person name="Donohue T.J."/>
            <person name="Kaplan S."/>
        </authorList>
    </citation>
    <scope>NUCLEOTIDE SEQUENCE [LARGE SCALE GENOMIC DNA]</scope>
    <source>
        <strain>ATCC 17025 / ATH 2.4.3</strain>
    </source>
</reference>
<gene>
    <name evidence="1" type="primary">rpsR</name>
    <name type="ordered locus">Rsph17025_1351</name>
</gene>
<proteinExistence type="inferred from homology"/>
<protein>
    <recommendedName>
        <fullName evidence="1">Small ribosomal subunit protein bS18</fullName>
    </recommendedName>
    <alternativeName>
        <fullName evidence="2">30S ribosomal protein S18</fullName>
    </alternativeName>
</protein>
<feature type="chain" id="PRO_1000003590" description="Small ribosomal subunit protein bS18">
    <location>
        <begin position="1"/>
        <end position="75"/>
    </location>
</feature>
<comment type="function">
    <text evidence="1">Binds as a heterodimer with protein bS6 to the central domain of the 16S rRNA, where it helps stabilize the platform of the 30S subunit.</text>
</comment>
<comment type="subunit">
    <text evidence="1">Part of the 30S ribosomal subunit. Forms a tight heterodimer with protein bS6.</text>
</comment>
<comment type="similarity">
    <text evidence="1">Belongs to the bacterial ribosomal protein bS18 family.</text>
</comment>
<evidence type="ECO:0000255" key="1">
    <source>
        <dbReference type="HAMAP-Rule" id="MF_00270"/>
    </source>
</evidence>
<evidence type="ECO:0000305" key="2"/>
<organism>
    <name type="scientific">Cereibacter sphaeroides (strain ATCC 17025 / ATH 2.4.3)</name>
    <name type="common">Rhodobacter sphaeroides</name>
    <dbReference type="NCBI Taxonomy" id="349102"/>
    <lineage>
        <taxon>Bacteria</taxon>
        <taxon>Pseudomonadati</taxon>
        <taxon>Pseudomonadota</taxon>
        <taxon>Alphaproteobacteria</taxon>
        <taxon>Rhodobacterales</taxon>
        <taxon>Paracoccaceae</taxon>
        <taxon>Cereibacter</taxon>
    </lineage>
</organism>
<dbReference type="EMBL" id="CP000661">
    <property type="protein sequence ID" value="ABP70248.1"/>
    <property type="molecule type" value="Genomic_DNA"/>
</dbReference>
<dbReference type="SMR" id="A4WS84"/>
<dbReference type="STRING" id="349102.Rsph17025_1351"/>
<dbReference type="KEGG" id="rsq:Rsph17025_1351"/>
<dbReference type="eggNOG" id="COG0238">
    <property type="taxonomic scope" value="Bacteria"/>
</dbReference>
<dbReference type="HOGENOM" id="CLU_148710_2_3_5"/>
<dbReference type="BioCyc" id="RSPH349102:G1G8M-1389-MONOMER"/>
<dbReference type="GO" id="GO:0022627">
    <property type="term" value="C:cytosolic small ribosomal subunit"/>
    <property type="evidence" value="ECO:0007669"/>
    <property type="project" value="TreeGrafter"/>
</dbReference>
<dbReference type="GO" id="GO:0070181">
    <property type="term" value="F:small ribosomal subunit rRNA binding"/>
    <property type="evidence" value="ECO:0007669"/>
    <property type="project" value="TreeGrafter"/>
</dbReference>
<dbReference type="GO" id="GO:0003735">
    <property type="term" value="F:structural constituent of ribosome"/>
    <property type="evidence" value="ECO:0007669"/>
    <property type="project" value="InterPro"/>
</dbReference>
<dbReference type="GO" id="GO:0006412">
    <property type="term" value="P:translation"/>
    <property type="evidence" value="ECO:0007669"/>
    <property type="project" value="UniProtKB-UniRule"/>
</dbReference>
<dbReference type="Gene3D" id="4.10.640.10">
    <property type="entry name" value="Ribosomal protein S18"/>
    <property type="match status" value="1"/>
</dbReference>
<dbReference type="HAMAP" id="MF_00270">
    <property type="entry name" value="Ribosomal_bS18"/>
    <property type="match status" value="1"/>
</dbReference>
<dbReference type="InterPro" id="IPR001648">
    <property type="entry name" value="Ribosomal_bS18"/>
</dbReference>
<dbReference type="InterPro" id="IPR018275">
    <property type="entry name" value="Ribosomal_bS18_CS"/>
</dbReference>
<dbReference type="InterPro" id="IPR036870">
    <property type="entry name" value="Ribosomal_bS18_sf"/>
</dbReference>
<dbReference type="NCBIfam" id="TIGR00165">
    <property type="entry name" value="S18"/>
    <property type="match status" value="1"/>
</dbReference>
<dbReference type="PANTHER" id="PTHR13479">
    <property type="entry name" value="30S RIBOSOMAL PROTEIN S18"/>
    <property type="match status" value="1"/>
</dbReference>
<dbReference type="PANTHER" id="PTHR13479:SF40">
    <property type="entry name" value="SMALL RIBOSOMAL SUBUNIT PROTEIN BS18M"/>
    <property type="match status" value="1"/>
</dbReference>
<dbReference type="Pfam" id="PF01084">
    <property type="entry name" value="Ribosomal_S18"/>
    <property type="match status" value="1"/>
</dbReference>
<dbReference type="PRINTS" id="PR00974">
    <property type="entry name" value="RIBOSOMALS18"/>
</dbReference>
<dbReference type="SUPFAM" id="SSF46911">
    <property type="entry name" value="Ribosomal protein S18"/>
    <property type="match status" value="1"/>
</dbReference>
<dbReference type="PROSITE" id="PS00057">
    <property type="entry name" value="RIBOSOMAL_S18"/>
    <property type="match status" value="1"/>
</dbReference>
<sequence>MANKPFFRRRKVCPFSGDNAPAIDYKDTRLLQRYISERGKIVPSRITAVSAKKQRELAAAIKRARFLALLPYAVK</sequence>
<name>RS18_CERS5</name>